<dbReference type="EMBL" id="CP001400">
    <property type="protein sequence ID" value="ACP36922.1"/>
    <property type="molecule type" value="Genomic_DNA"/>
</dbReference>
<dbReference type="SMR" id="C3MTN8"/>
<dbReference type="GeneID" id="7795408"/>
<dbReference type="KEGG" id="sia:M1425_0030"/>
<dbReference type="HOGENOM" id="CLU_053134_0_0_2"/>
<dbReference type="Proteomes" id="UP000001350">
    <property type="component" value="Chromosome"/>
</dbReference>
<dbReference type="GO" id="GO:0008939">
    <property type="term" value="F:nicotinate-nucleotide-dimethylbenzimidazole phosphoribosyltransferase activity"/>
    <property type="evidence" value="ECO:0007669"/>
    <property type="project" value="InterPro"/>
</dbReference>
<dbReference type="CDD" id="cd02439">
    <property type="entry name" value="DMB-PRT_CobT"/>
    <property type="match status" value="1"/>
</dbReference>
<dbReference type="Gene3D" id="3.40.50.10210">
    <property type="match status" value="1"/>
</dbReference>
<dbReference type="HAMAP" id="MF_01086">
    <property type="entry name" value="UPF0284"/>
    <property type="match status" value="1"/>
</dbReference>
<dbReference type="InterPro" id="IPR003200">
    <property type="entry name" value="Nict_dMeBzImd_PRibTrfase"/>
</dbReference>
<dbReference type="InterPro" id="IPR002805">
    <property type="entry name" value="Nict_dMeBzImd_PRibTrfase_arc"/>
</dbReference>
<dbReference type="InterPro" id="IPR036087">
    <property type="entry name" value="Nict_dMeBzImd_PRibTrfase_sf"/>
</dbReference>
<dbReference type="NCBIfam" id="TIGR00303">
    <property type="entry name" value="nicotinate mononucleotide-dependent phosphoribosyltransferase CobT"/>
    <property type="match status" value="1"/>
</dbReference>
<dbReference type="NCBIfam" id="NF003368">
    <property type="entry name" value="PRK04447.1-1"/>
    <property type="match status" value="1"/>
</dbReference>
<dbReference type="NCBIfam" id="NF003370">
    <property type="entry name" value="PRK04447.1-3"/>
    <property type="match status" value="1"/>
</dbReference>
<dbReference type="NCBIfam" id="NF003372">
    <property type="entry name" value="PRK04447.1-5"/>
    <property type="match status" value="1"/>
</dbReference>
<dbReference type="PANTHER" id="PTHR38811">
    <property type="match status" value="1"/>
</dbReference>
<dbReference type="PANTHER" id="PTHR38811:SF1">
    <property type="entry name" value="UPF0284 PROTEIN SLL1500"/>
    <property type="match status" value="1"/>
</dbReference>
<dbReference type="Pfam" id="PF02277">
    <property type="entry name" value="DBI_PRT"/>
    <property type="match status" value="1"/>
</dbReference>
<dbReference type="SUPFAM" id="SSF52733">
    <property type="entry name" value="Nicotinate mononucleotide:5,6-dimethylbenzimidazole phosphoribosyltransferase (CobT)"/>
    <property type="match status" value="1"/>
</dbReference>
<organism>
    <name type="scientific">Saccharolobus islandicus (strain M.14.25 / Kamchatka #1)</name>
    <name type="common">Sulfolobus islandicus</name>
    <dbReference type="NCBI Taxonomy" id="427317"/>
    <lineage>
        <taxon>Archaea</taxon>
        <taxon>Thermoproteota</taxon>
        <taxon>Thermoprotei</taxon>
        <taxon>Sulfolobales</taxon>
        <taxon>Sulfolobaceae</taxon>
        <taxon>Saccharolobus</taxon>
    </lineage>
</organism>
<protein>
    <recommendedName>
        <fullName evidence="1">UPF0284 protein M1425_0030</fullName>
    </recommendedName>
</protein>
<feature type="chain" id="PRO_1000213532" description="UPF0284 protein M1425_0030">
    <location>
        <begin position="1"/>
        <end position="347"/>
    </location>
</feature>
<sequence length="347" mass="37037">MIKEYYGAETFILNKDFAYILVIGTTDVSLIPGLTIAGATPELTHFTPAADAEYVLLGKCKSINTIPVSPTGIPTPALLTRASLSFINPLKIVVNAGSRILPKIPYIDLQGEPGKDIRKQALSMEKVNNIIENSIKLGEELSNEYELIMIGESIPAGTTTAMATLLALGYDAMDKVSSASPDNPKELKRKVVEEALRNLPTDPLQRLAKVSDPVLLGVAGTSLGFKGKILLAGGTQMTAAAAIINEFDKNKLKDITIGTTKWIVEDKFADMLSLAKQVGVKVLASMLDLSISAYEGIRAYEKGYVKEGVGAGGSAIMALVKGVSNNTLVRKIDELYGELVGSSNLHI</sequence>
<gene>
    <name type="ordered locus">M1425_0030</name>
</gene>
<reference key="1">
    <citation type="journal article" date="2009" name="Proc. Natl. Acad. Sci. U.S.A.">
        <title>Biogeography of the Sulfolobus islandicus pan-genome.</title>
        <authorList>
            <person name="Reno M.L."/>
            <person name="Held N.L."/>
            <person name="Fields C.J."/>
            <person name="Burke P.V."/>
            <person name="Whitaker R.J."/>
        </authorList>
    </citation>
    <scope>NUCLEOTIDE SEQUENCE [LARGE SCALE GENOMIC DNA]</scope>
    <source>
        <strain>M.14.25 / Kamchatka #1</strain>
    </source>
</reference>
<accession>C3MTN8</accession>
<name>Y030_SACI4</name>
<proteinExistence type="inferred from homology"/>
<comment type="similarity">
    <text evidence="1">Belongs to the UPF0284 family.</text>
</comment>
<evidence type="ECO:0000255" key="1">
    <source>
        <dbReference type="HAMAP-Rule" id="MF_01086"/>
    </source>
</evidence>